<proteinExistence type="evidence at protein level"/>
<protein>
    <recommendedName>
        <fullName>Uncharacterized protein Rv0955</fullName>
    </recommendedName>
</protein>
<name>Y955_MYCTU</name>
<gene>
    <name type="ordered locus">Rv0955</name>
    <name type="ORF">MTCY10D7.19c</name>
</gene>
<feature type="chain" id="PRO_0000103751" description="Uncharacterized protein Rv0955">
    <location>
        <begin position="1"/>
        <end position="455"/>
    </location>
</feature>
<feature type="transmembrane region" description="Helical" evidence="1">
    <location>
        <begin position="26"/>
        <end position="46"/>
    </location>
</feature>
<feature type="transmembrane region" description="Helical" evidence="1">
    <location>
        <begin position="53"/>
        <end position="73"/>
    </location>
</feature>
<feature type="transmembrane region" description="Helical" evidence="1">
    <location>
        <begin position="77"/>
        <end position="97"/>
    </location>
</feature>
<feature type="transmembrane region" description="Helical" evidence="1">
    <location>
        <begin position="111"/>
        <end position="131"/>
    </location>
</feature>
<feature type="transmembrane region" description="Helical" evidence="1">
    <location>
        <begin position="146"/>
        <end position="166"/>
    </location>
</feature>
<feature type="transmembrane region" description="Helical" evidence="1">
    <location>
        <begin position="191"/>
        <end position="211"/>
    </location>
</feature>
<feature type="transmembrane region" description="Helical" evidence="1">
    <location>
        <begin position="232"/>
        <end position="252"/>
    </location>
</feature>
<feature type="transmembrane region" description="Helical" evidence="1">
    <location>
        <begin position="256"/>
        <end position="276"/>
    </location>
</feature>
<feature type="transmembrane region" description="Helical" evidence="1">
    <location>
        <begin position="278"/>
        <end position="298"/>
    </location>
</feature>
<feature type="transmembrane region" description="Helical" evidence="1">
    <location>
        <begin position="323"/>
        <end position="343"/>
    </location>
</feature>
<feature type="transmembrane region" description="Helical" evidence="1">
    <location>
        <begin position="357"/>
        <end position="377"/>
    </location>
</feature>
<feature type="region of interest" description="Disordered" evidence="2">
    <location>
        <begin position="384"/>
        <end position="455"/>
    </location>
</feature>
<reference key="1">
    <citation type="journal article" date="1998" name="Nature">
        <title>Deciphering the biology of Mycobacterium tuberculosis from the complete genome sequence.</title>
        <authorList>
            <person name="Cole S.T."/>
            <person name="Brosch R."/>
            <person name="Parkhill J."/>
            <person name="Garnier T."/>
            <person name="Churcher C.M."/>
            <person name="Harris D.E."/>
            <person name="Gordon S.V."/>
            <person name="Eiglmeier K."/>
            <person name="Gas S."/>
            <person name="Barry C.E. III"/>
            <person name="Tekaia F."/>
            <person name="Badcock K."/>
            <person name="Basham D."/>
            <person name="Brown D."/>
            <person name="Chillingworth T."/>
            <person name="Connor R."/>
            <person name="Davies R.M."/>
            <person name="Devlin K."/>
            <person name="Feltwell T."/>
            <person name="Gentles S."/>
            <person name="Hamlin N."/>
            <person name="Holroyd S."/>
            <person name="Hornsby T."/>
            <person name="Jagels K."/>
            <person name="Krogh A."/>
            <person name="McLean J."/>
            <person name="Moule S."/>
            <person name="Murphy L.D."/>
            <person name="Oliver S."/>
            <person name="Osborne J."/>
            <person name="Quail M.A."/>
            <person name="Rajandream M.A."/>
            <person name="Rogers J."/>
            <person name="Rutter S."/>
            <person name="Seeger K."/>
            <person name="Skelton S."/>
            <person name="Squares S."/>
            <person name="Squares R."/>
            <person name="Sulston J.E."/>
            <person name="Taylor K."/>
            <person name="Whitehead S."/>
            <person name="Barrell B.G."/>
        </authorList>
    </citation>
    <scope>NUCLEOTIDE SEQUENCE [LARGE SCALE GENOMIC DNA]</scope>
    <source>
        <strain>ATCC 25618 / H37Rv</strain>
    </source>
</reference>
<reference key="2">
    <citation type="journal article" date="2011" name="Mol. Cell. Proteomics">
        <title>Proteogenomic analysis of Mycobacterium tuberculosis by high resolution mass spectrometry.</title>
        <authorList>
            <person name="Kelkar D.S."/>
            <person name="Kumar D."/>
            <person name="Kumar P."/>
            <person name="Balakrishnan L."/>
            <person name="Muthusamy B."/>
            <person name="Yadav A.K."/>
            <person name="Shrivastava P."/>
            <person name="Marimuthu A."/>
            <person name="Anand S."/>
            <person name="Sundaram H."/>
            <person name="Kingsbury R."/>
            <person name="Harsha H.C."/>
            <person name="Nair B."/>
            <person name="Prasad T.S."/>
            <person name="Chauhan D.S."/>
            <person name="Katoch K."/>
            <person name="Katoch V.M."/>
            <person name="Kumar P."/>
            <person name="Chaerkady R."/>
            <person name="Ramachandran S."/>
            <person name="Dash D."/>
            <person name="Pandey A."/>
        </authorList>
    </citation>
    <scope>IDENTIFICATION BY MASS SPECTROMETRY [LARGE SCALE ANALYSIS]</scope>
    <source>
        <strain>ATCC 25618 / H37Rv</strain>
    </source>
</reference>
<evidence type="ECO:0000255" key="1"/>
<evidence type="ECO:0000256" key="2">
    <source>
        <dbReference type="SAM" id="MobiDB-lite"/>
    </source>
</evidence>
<evidence type="ECO:0000305" key="3"/>
<keyword id="KW-1003">Cell membrane</keyword>
<keyword id="KW-0472">Membrane</keyword>
<keyword id="KW-1185">Reference proteome</keyword>
<keyword id="KW-0812">Transmembrane</keyword>
<keyword id="KW-1133">Transmembrane helix</keyword>
<dbReference type="EMBL" id="AL123456">
    <property type="protein sequence ID" value="CCP43703.1"/>
    <property type="molecule type" value="Genomic_DNA"/>
</dbReference>
<dbReference type="PIR" id="A70717">
    <property type="entry name" value="A70717"/>
</dbReference>
<dbReference type="RefSeq" id="NP_215470.1">
    <property type="nucleotide sequence ID" value="NC_000962.3"/>
</dbReference>
<dbReference type="RefSeq" id="WP_003901049.1">
    <property type="nucleotide sequence ID" value="NZ_NVQJ01000001.1"/>
</dbReference>
<dbReference type="STRING" id="83332.Rv0955"/>
<dbReference type="PaxDb" id="83332-Rv0955"/>
<dbReference type="DNASU" id="885408"/>
<dbReference type="GeneID" id="885408"/>
<dbReference type="KEGG" id="mtu:Rv0955"/>
<dbReference type="KEGG" id="mtv:RVBD_0955"/>
<dbReference type="TubercuList" id="Rv0955"/>
<dbReference type="eggNOG" id="ENOG5033EIZ">
    <property type="taxonomic scope" value="Bacteria"/>
</dbReference>
<dbReference type="InParanoid" id="P9WKN3"/>
<dbReference type="OrthoDB" id="4775522at2"/>
<dbReference type="Proteomes" id="UP000001584">
    <property type="component" value="Chromosome"/>
</dbReference>
<dbReference type="GO" id="GO:0005886">
    <property type="term" value="C:plasma membrane"/>
    <property type="evidence" value="ECO:0007669"/>
    <property type="project" value="UniProtKB-SubCell"/>
</dbReference>
<dbReference type="InterPro" id="IPR045931">
    <property type="entry name" value="DUF6350"/>
</dbReference>
<dbReference type="Pfam" id="PF19877">
    <property type="entry name" value="DUF6350"/>
    <property type="match status" value="1"/>
</dbReference>
<organism>
    <name type="scientific">Mycobacterium tuberculosis (strain ATCC 25618 / H37Rv)</name>
    <dbReference type="NCBI Taxonomy" id="83332"/>
    <lineage>
        <taxon>Bacteria</taxon>
        <taxon>Bacillati</taxon>
        <taxon>Actinomycetota</taxon>
        <taxon>Actinomycetes</taxon>
        <taxon>Mycobacteriales</taxon>
        <taxon>Mycobacteriaceae</taxon>
        <taxon>Mycobacterium</taxon>
        <taxon>Mycobacterium tuberculosis complex</taxon>
    </lineage>
</organism>
<sequence>MNRVSASADDRAAGARPARDLVRVAFGPGVVALGIIAAVTLLQLLIANSDMTGAWGAIASMWLGVHLVPISIGGRALGVMPLLPVLLMVWATARSTARATSPQSSGLVVRWVVASALGGPLLMAAIALAVIHDASSVVTELQTPSALRAFTSVLVVHSVGAATGVWSRVGRRALAATALPDWLHDSMRAAAAGVLALLGLSGVVTAGSLVVHWATMQELYGITDSIFGQFSLTVLSVLYAPNVIVGTSAIAVGSSAHIGFATFSSFAVLGGDIPALPILAAAPTPPLGPAWVALLIVGASSGVAVGQQCARRALPFVAAMAKLLVAAVAGALVMAVLGYGGGGRLGNFGDVGVDEGALVLGVLFWFTFVGWVTVVIAGGISRRPKRLRPAPPVELDADESSPPVDMFDGAASEQPPASVAEDVPPSHDDIANGLKAPTADDEALPLSDEPPPRAD</sequence>
<comment type="subcellular location">
    <subcellularLocation>
        <location evidence="3">Cell membrane</location>
        <topology evidence="3">Multi-pass membrane protein</topology>
    </subcellularLocation>
</comment>
<accession>P9WKN3</accession>
<accession>L0T805</accession>
<accession>P64771</accession>
<accession>P71555</accession>